<comment type="function">
    <text evidence="3 4 5">DNA deaminase (cytidine deaminase) which acts as an inhibitor of retrovirus replication and retrotransposon mobility via deaminase-dependent and -independent mechanisms. Exhibits antiviral activity against vif-deficient: HIV-1 and simian immunodeficiency viruses (SIVs) and also simian foamy virus (SFV). After the penetration of retroviral nucleocapsids into target cells of infection and the initiation of reverse transcription, it can induce the conversion of cytosine to uracil in the minus-sense single-strand viral DNA, leading to G-to-A hypermutations in the subsequent plus-strand viral DNA. The resultant detrimental levels of mutations in the proviral genome, along with a deamination-independent mechanism that works prior to the proviral integration, together exert efficient antiretroviral effects in infected target cells. Selectively targets single-stranded DNA and does not deaminate double-stranded DNA or single- or double-stranded RNA. May inhibit the mobility of LTR retrotransposons.</text>
</comment>
<comment type="catalytic activity">
    <reaction evidence="1">
        <text>a 2'-deoxycytidine in single-stranded DNA + H2O + H(+) = a 2'-deoxyuridine in single-stranded DNA + NH4(+)</text>
        <dbReference type="Rhea" id="RHEA:50948"/>
        <dbReference type="Rhea" id="RHEA-COMP:12846"/>
        <dbReference type="Rhea" id="RHEA-COMP:12847"/>
        <dbReference type="ChEBI" id="CHEBI:15377"/>
        <dbReference type="ChEBI" id="CHEBI:15378"/>
        <dbReference type="ChEBI" id="CHEBI:28938"/>
        <dbReference type="ChEBI" id="CHEBI:85452"/>
        <dbReference type="ChEBI" id="CHEBI:133902"/>
        <dbReference type="EC" id="3.5.4.38"/>
    </reaction>
</comment>
<comment type="cofactor">
    <cofactor evidence="1">
        <name>Zn(2+)</name>
        <dbReference type="ChEBI" id="CHEBI:29105"/>
    </cofactor>
</comment>
<comment type="subunit">
    <text evidence="1">Homodimer. Homooligomer. Can bind RNA to form ribonucleoprotein complexes of high-molecular-mass (HMM) or low-molecular-mass (LMM). HMM is inactive and heterogeneous in protein composition because of binding nonselectively to cellular RNAs, which in turn are associated with variety of cellular proteins. The LMM form which is enzymatically active has few or no RNAs associated. Its ability to form homooligomer is distinct from its ability to assemble into HMM. Interacts with APOBEC3B, APOBEC3F, MOV10, AGO2, EIF4E, EIF4ENIF1, DCP2 and DDX6 in an RNA-dependent manner. Interacts with AGO1, AGO3 and PKA/PRKACA (By similarity).</text>
</comment>
<comment type="subcellular location">
    <subcellularLocation>
        <location evidence="1">Cytoplasm</location>
    </subcellularLocation>
    <subcellularLocation>
        <location evidence="1">Nucleus</location>
    </subcellularLocation>
    <subcellularLocation>
        <location evidence="1">Cytoplasm</location>
        <location evidence="1">P-body</location>
    </subcellularLocation>
    <text evidence="1">Mainly cytoplasmic, small amount are found in the nucleus.</text>
</comment>
<comment type="domain">
    <text evidence="1">The CMP/dCMP deaminase domain 1 mediates RNA binding, RNA-dependent oligomerization and virion incorporation whereas the CMP/dCMP deaminase domain 2 confers deoxycytidine deaminase activity and substrate sequence specificity.</text>
</comment>
<comment type="miscellaneous">
    <text>Accumulation of APOBEC3G induced non-lethal hypermutation could contribute to the genetic variation of primate lentiviral populations.</text>
</comment>
<comment type="similarity">
    <text evidence="6">Belongs to the cytidine and deoxycytidylate deaminase family.</text>
</comment>
<sequence length="377" mass="44720">MNPQIRNMVEQMEPDIFVYYFNNRPILSGRNTVWLCYEVKTKDPSGPPLDANIFQGKLYPEAKDHPEMKFLHWFRKWRQLHRDQEYEVTWYVSWSPCTRCANSVATFLAEDPKVTLTIFVARLYYFWKPDYQQALRILCQERGGPHATMKIMNYNEFQHCWNEFVDGQGKPFKPRKNLPKHYTLLHATLGELLRHVMDPGTFTSNFNNKPWVSGQRETYLCYKVERSHNDTWVLLNQHRGFLRNQAPDRHGFPKGRHAELCFLDLIPFWKLDDQQYRVTCFTSWSPCFSCAQKMAKFISNNKHVSLCIFAARIYDDQGRCQEGLRTLHRDGAKIAVMNYSEFEYCWDTFVDRQGRPFQPWDGLDEHSQALSGRLRAI</sequence>
<gene>
    <name type="primary">APOBEC3G</name>
</gene>
<keyword id="KW-0051">Antiviral defense</keyword>
<keyword id="KW-0963">Cytoplasm</keyword>
<keyword id="KW-0378">Hydrolase</keyword>
<keyword id="KW-0391">Immunity</keyword>
<keyword id="KW-0399">Innate immunity</keyword>
<keyword id="KW-0479">Metal-binding</keyword>
<keyword id="KW-0539">Nucleus</keyword>
<keyword id="KW-0597">Phosphoprotein</keyword>
<keyword id="KW-0677">Repeat</keyword>
<keyword id="KW-0862">Zinc</keyword>
<feature type="chain" id="PRO_0000171758" description="DNA dC-&gt;dU-editing enzyme APOBEC-3G">
    <location>
        <begin position="1"/>
        <end position="377" status="greater than"/>
    </location>
</feature>
<feature type="domain" description="CMP/dCMP-type deaminase 1" evidence="2">
    <location>
        <begin position="29"/>
        <end position="138"/>
    </location>
</feature>
<feature type="domain" description="CMP/dCMP-type deaminase 2" evidence="2">
    <location>
        <begin position="214"/>
        <end position="327"/>
    </location>
</feature>
<feature type="region of interest" description="Essential for cytoplasmic localization" evidence="6">
    <location>
        <begin position="1"/>
        <end position="60"/>
    </location>
</feature>
<feature type="region of interest" description="Necessary for homooligomerization" evidence="6">
    <location>
        <begin position="209"/>
        <end position="335"/>
    </location>
</feature>
<feature type="region of interest" description="Interaction with DNA" evidence="6">
    <location>
        <begin position="213"/>
        <end position="215"/>
    </location>
</feature>
<feature type="region of interest" description="Interaction with DNA" evidence="6">
    <location>
        <begin position="312"/>
        <end position="319"/>
    </location>
</feature>
<feature type="active site" description="Proton donor" evidence="2">
    <location>
        <position position="259"/>
    </location>
</feature>
<feature type="binding site" evidence="2">
    <location>
        <position position="65"/>
    </location>
    <ligand>
        <name>Zn(2+)</name>
        <dbReference type="ChEBI" id="CHEBI:29105"/>
        <label>1</label>
    </ligand>
</feature>
<feature type="binding site" evidence="2">
    <location>
        <position position="97"/>
    </location>
    <ligand>
        <name>Zn(2+)</name>
        <dbReference type="ChEBI" id="CHEBI:29105"/>
        <label>1</label>
    </ligand>
</feature>
<feature type="binding site" evidence="2">
    <location>
        <position position="100"/>
    </location>
    <ligand>
        <name>Zn(2+)</name>
        <dbReference type="ChEBI" id="CHEBI:29105"/>
        <label>1</label>
    </ligand>
</feature>
<feature type="binding site" evidence="1">
    <location>
        <position position="257"/>
    </location>
    <ligand>
        <name>Zn(2+)</name>
        <dbReference type="ChEBI" id="CHEBI:29105"/>
        <label>2</label>
        <note>catalytic</note>
    </ligand>
</feature>
<feature type="binding site" evidence="1">
    <location>
        <position position="287"/>
    </location>
    <ligand>
        <name>Zn(2+)</name>
        <dbReference type="ChEBI" id="CHEBI:29105"/>
        <label>2</label>
        <note>catalytic</note>
    </ligand>
</feature>
<feature type="binding site" evidence="1">
    <location>
        <position position="290"/>
    </location>
    <ligand>
        <name>Zn(2+)</name>
        <dbReference type="ChEBI" id="CHEBI:29105"/>
        <label>2</label>
        <note>catalytic</note>
    </ligand>
</feature>
<feature type="site" description="Interaction with DNA" evidence="6">
    <location>
        <position position="244"/>
    </location>
</feature>
<feature type="modified residue" description="Phosphothreonine; by PKA" evidence="1">
    <location>
        <position position="32"/>
    </location>
</feature>
<feature type="modified residue" description="Phosphothreonine; by PKA and CAMK2" evidence="1">
    <location>
        <position position="218"/>
    </location>
</feature>
<feature type="non-terminal residue">
    <location>
        <position position="377"/>
    </location>
</feature>
<proteinExistence type="evidence at protein level"/>
<dbReference type="EC" id="3.5.4.38" evidence="1"/>
<dbReference type="EMBL" id="AY331714">
    <property type="protein sequence ID" value="AAP85254.1"/>
    <property type="molecule type" value="mRNA"/>
</dbReference>
<dbReference type="SMR" id="Q7YR25"/>
<dbReference type="GO" id="GO:0005737">
    <property type="term" value="C:cytoplasm"/>
    <property type="evidence" value="ECO:0000250"/>
    <property type="project" value="UniProtKB"/>
</dbReference>
<dbReference type="GO" id="GO:0005634">
    <property type="term" value="C:nucleus"/>
    <property type="evidence" value="ECO:0007669"/>
    <property type="project" value="UniProtKB-SubCell"/>
</dbReference>
<dbReference type="GO" id="GO:0000932">
    <property type="term" value="C:P-body"/>
    <property type="evidence" value="ECO:0000250"/>
    <property type="project" value="UniProtKB"/>
</dbReference>
<dbReference type="GO" id="GO:1990904">
    <property type="term" value="C:ribonucleoprotein complex"/>
    <property type="evidence" value="ECO:0000250"/>
    <property type="project" value="UniProtKB"/>
</dbReference>
<dbReference type="GO" id="GO:0004126">
    <property type="term" value="F:cytidine deaminase activity"/>
    <property type="evidence" value="ECO:0000250"/>
    <property type="project" value="UniProtKB"/>
</dbReference>
<dbReference type="GO" id="GO:0003723">
    <property type="term" value="F:RNA binding"/>
    <property type="evidence" value="ECO:0007669"/>
    <property type="project" value="TreeGrafter"/>
</dbReference>
<dbReference type="GO" id="GO:0008270">
    <property type="term" value="F:zinc ion binding"/>
    <property type="evidence" value="ECO:0007669"/>
    <property type="project" value="InterPro"/>
</dbReference>
<dbReference type="GO" id="GO:0009972">
    <property type="term" value="P:cytidine deamination"/>
    <property type="evidence" value="ECO:0000250"/>
    <property type="project" value="UniProtKB"/>
</dbReference>
<dbReference type="GO" id="GO:0016554">
    <property type="term" value="P:cytidine to uridine editing"/>
    <property type="evidence" value="ECO:0007669"/>
    <property type="project" value="TreeGrafter"/>
</dbReference>
<dbReference type="GO" id="GO:0051607">
    <property type="term" value="P:defense response to virus"/>
    <property type="evidence" value="ECO:0000250"/>
    <property type="project" value="UniProtKB"/>
</dbReference>
<dbReference type="GO" id="GO:0070383">
    <property type="term" value="P:DNA cytosine deamination"/>
    <property type="evidence" value="ECO:0007669"/>
    <property type="project" value="TreeGrafter"/>
</dbReference>
<dbReference type="GO" id="GO:0045087">
    <property type="term" value="P:innate immune response"/>
    <property type="evidence" value="ECO:0007669"/>
    <property type="project" value="UniProtKB-KW"/>
</dbReference>
<dbReference type="GO" id="GO:0045869">
    <property type="term" value="P:negative regulation of single stranded viral RNA replication via double stranded DNA intermediate"/>
    <property type="evidence" value="ECO:0007669"/>
    <property type="project" value="TreeGrafter"/>
</dbReference>
<dbReference type="GO" id="GO:0045071">
    <property type="term" value="P:negative regulation of viral genome replication"/>
    <property type="evidence" value="ECO:0000314"/>
    <property type="project" value="UniProtKB"/>
</dbReference>
<dbReference type="GO" id="GO:0010526">
    <property type="term" value="P:transposable element silencing"/>
    <property type="evidence" value="ECO:0000250"/>
    <property type="project" value="UniProtKB"/>
</dbReference>
<dbReference type="CDD" id="cd01283">
    <property type="entry name" value="cytidine_deaminase"/>
    <property type="match status" value="2"/>
</dbReference>
<dbReference type="FunFam" id="3.40.140.10:FF:000029">
    <property type="entry name" value="DNA dC-&gt;dU-editing enzyme APOBEC-3G"/>
    <property type="match status" value="2"/>
</dbReference>
<dbReference type="Gene3D" id="3.40.140.10">
    <property type="entry name" value="Cytidine Deaminase, domain 2"/>
    <property type="match status" value="2"/>
</dbReference>
<dbReference type="InterPro" id="IPR016192">
    <property type="entry name" value="APOBEC/CMP_deaminase_Zn-bd"/>
</dbReference>
<dbReference type="InterPro" id="IPR050610">
    <property type="entry name" value="APOBEC_Cyt_Deaminase"/>
</dbReference>
<dbReference type="InterPro" id="IPR002125">
    <property type="entry name" value="CMP_dCMP_dom"/>
</dbReference>
<dbReference type="InterPro" id="IPR016193">
    <property type="entry name" value="Cytidine_deaminase-like"/>
</dbReference>
<dbReference type="PANTHER" id="PTHR13857:SF20">
    <property type="entry name" value="DNA DC-DU-EDITING ENZYME APOBEC-3G"/>
    <property type="match status" value="1"/>
</dbReference>
<dbReference type="PANTHER" id="PTHR13857">
    <property type="entry name" value="MRNA EDITING ENZYME"/>
    <property type="match status" value="1"/>
</dbReference>
<dbReference type="Pfam" id="PF18782">
    <property type="entry name" value="NAD2"/>
    <property type="match status" value="2"/>
</dbReference>
<dbReference type="SUPFAM" id="SSF53927">
    <property type="entry name" value="Cytidine deaminase-like"/>
    <property type="match status" value="2"/>
</dbReference>
<dbReference type="PROSITE" id="PS00903">
    <property type="entry name" value="CYT_DCMP_DEAMINASES_1"/>
    <property type="match status" value="1"/>
</dbReference>
<dbReference type="PROSITE" id="PS51747">
    <property type="entry name" value="CYT_DCMP_DEAMINASES_2"/>
    <property type="match status" value="2"/>
</dbReference>
<accession>Q7YR25</accession>
<name>ABC3G_CHLAE</name>
<protein>
    <recommendedName>
        <fullName evidence="1">DNA dC-&gt;dU-editing enzyme APOBEC-3G</fullName>
        <ecNumber evidence="1">3.5.4.38</ecNumber>
    </recommendedName>
    <alternativeName>
        <fullName>Deoxycytidine deaminase</fullName>
    </alternativeName>
</protein>
<organism>
    <name type="scientific">Chlorocebus aethiops</name>
    <name type="common">Green monkey</name>
    <name type="synonym">Cercopithecus aethiops</name>
    <dbReference type="NCBI Taxonomy" id="9534"/>
    <lineage>
        <taxon>Eukaryota</taxon>
        <taxon>Metazoa</taxon>
        <taxon>Chordata</taxon>
        <taxon>Craniata</taxon>
        <taxon>Vertebrata</taxon>
        <taxon>Euteleostomi</taxon>
        <taxon>Mammalia</taxon>
        <taxon>Eutheria</taxon>
        <taxon>Euarchontoglires</taxon>
        <taxon>Primates</taxon>
        <taxon>Haplorrhini</taxon>
        <taxon>Catarrhini</taxon>
        <taxon>Cercopithecidae</taxon>
        <taxon>Cercopithecinae</taxon>
        <taxon>Chlorocebus</taxon>
    </lineage>
</organism>
<reference key="1">
    <citation type="journal article" date="2003" name="Cell">
        <title>Species-specific exclusion of APOBEC3G from HIV-1 virions by Vif.</title>
        <authorList>
            <person name="Mariani R."/>
            <person name="Chen D."/>
            <person name="Schroefelbauer B."/>
            <person name="Navarro F."/>
            <person name="Koenig R."/>
            <person name="Bollman B."/>
            <person name="Muenk C."/>
            <person name="Nymark-McMahon H."/>
            <person name="Landau N.R."/>
        </authorList>
    </citation>
    <scope>NUCLEOTIDE SEQUENCE [MRNA]</scope>
    <scope>FUNCTION IN DNA C TO U EDITING</scope>
    <scope>SPECIES-SPECIFIC RESTRICTION TO HIV-1 INFECTION</scope>
</reference>
<reference key="2">
    <citation type="journal article" date="2006" name="J. Virol.">
        <title>Restriction of foamy viruses by APOBEC cytidine deaminases.</title>
        <authorList>
            <person name="Delebecque F."/>
            <person name="Suspene R."/>
            <person name="Calattini S."/>
            <person name="Casartelli N."/>
            <person name="Saib A."/>
            <person name="Froment A."/>
            <person name="Wain-Hobson S."/>
            <person name="Gessain A."/>
            <person name="Vartanian J.P."/>
            <person name="Schwartz O."/>
        </authorList>
    </citation>
    <scope>FUNCTION IN SFV RESTRICTION</scope>
</reference>
<reference key="3">
    <citation type="journal article" date="2008" name="Annu. Rev. Immunol.">
        <title>The APOBEC3 cytidine deaminases: an innate defensive network opposing exogenous retroviruses and endogenous retroelements.</title>
        <authorList>
            <person name="Chiu Y.L."/>
            <person name="Greene W.C."/>
        </authorList>
    </citation>
    <scope>REVIEW</scope>
</reference>
<evidence type="ECO:0000250" key="1">
    <source>
        <dbReference type="UniProtKB" id="Q9HC16"/>
    </source>
</evidence>
<evidence type="ECO:0000255" key="2">
    <source>
        <dbReference type="PROSITE-ProRule" id="PRU01083"/>
    </source>
</evidence>
<evidence type="ECO:0000269" key="3">
    <source>
    </source>
</evidence>
<evidence type="ECO:0000269" key="4">
    <source>
    </source>
</evidence>
<evidence type="ECO:0000303" key="5">
    <source>
    </source>
</evidence>
<evidence type="ECO:0000305" key="6"/>